<keyword id="KW-0175">Coiled coil</keyword>
<keyword id="KW-0963">Cytoplasm</keyword>
<keyword id="KW-0396">Initiation factor</keyword>
<keyword id="KW-0648">Protein biosynthesis</keyword>
<keyword id="KW-1185">Reference proteome</keyword>
<comment type="function">
    <text evidence="1">Component of the eukaryotic translation initiation factor 3 (eIF-3) complex, which is involved in protein synthesis of a specialized repertoire of mRNAs and, together with other initiation factors, stimulates binding of mRNA and methionyl-tRNAi to the 40S ribosome. The eIF-3 complex specifically targets and initiates translation of a subset of mRNAs involved in cell proliferation.</text>
</comment>
<comment type="subunit">
    <text evidence="1">Component of the eukaryotic translation initiation factor 3 (eIF-3) complex.</text>
</comment>
<comment type="subcellular location">
    <subcellularLocation>
        <location evidence="1">Cytoplasm</location>
    </subcellularLocation>
</comment>
<comment type="similarity">
    <text evidence="1">Belongs to the eIF-3 subunit J family.</text>
</comment>
<gene>
    <name type="ORF">AAEL012279</name>
</gene>
<sequence>MEEDWEQLSEQEKVPIPAKKPDVNKWDGEDEEEEVKDSWEDEDELEEKKDEEKVETPKAKPKKTLQQKIADKEKLKQEEAERRRLEKEEEDMTPEQKLAEKLRLQKLQEESDLKNALDTFGVTSIVGGIDGMHPTNKEEFIELSDAICKKLSNYKNDTEYCAFLEDLVTKLFASLPSANIRKVKGILDNLYLEKQKLEKGDKPKKKAGGKIKARLRMDGENQNFDEYAPKYDDFDEYDDFM</sequence>
<name>EIF3J_AEDAE</name>
<accession>Q16MK2</accession>
<reference key="1">
    <citation type="journal article" date="2007" name="Science">
        <title>Genome sequence of Aedes aegypti, a major arbovirus vector.</title>
        <authorList>
            <person name="Nene V."/>
            <person name="Wortman J.R."/>
            <person name="Lawson D."/>
            <person name="Haas B.J."/>
            <person name="Kodira C.D."/>
            <person name="Tu Z.J."/>
            <person name="Loftus B.J."/>
            <person name="Xi Z."/>
            <person name="Megy K."/>
            <person name="Grabherr M."/>
            <person name="Ren Q."/>
            <person name="Zdobnov E.M."/>
            <person name="Lobo N.F."/>
            <person name="Campbell K.S."/>
            <person name="Brown S.E."/>
            <person name="Bonaldo M.F."/>
            <person name="Zhu J."/>
            <person name="Sinkins S.P."/>
            <person name="Hogenkamp D.G."/>
            <person name="Amedeo P."/>
            <person name="Arensburger P."/>
            <person name="Atkinson P.W."/>
            <person name="Bidwell S.L."/>
            <person name="Biedler J."/>
            <person name="Birney E."/>
            <person name="Bruggner R.V."/>
            <person name="Costas J."/>
            <person name="Coy M.R."/>
            <person name="Crabtree J."/>
            <person name="Crawford M."/>
            <person name="DeBruyn B."/>
            <person name="DeCaprio D."/>
            <person name="Eiglmeier K."/>
            <person name="Eisenstadt E."/>
            <person name="El-Dorry H."/>
            <person name="Gelbart W.M."/>
            <person name="Gomes S.L."/>
            <person name="Hammond M."/>
            <person name="Hannick L.I."/>
            <person name="Hogan J.R."/>
            <person name="Holmes M.H."/>
            <person name="Jaffe D."/>
            <person name="Johnston S.J."/>
            <person name="Kennedy R.C."/>
            <person name="Koo H."/>
            <person name="Kravitz S."/>
            <person name="Kriventseva E.V."/>
            <person name="Kulp D."/>
            <person name="Labutti K."/>
            <person name="Lee E."/>
            <person name="Li S."/>
            <person name="Lovin D.D."/>
            <person name="Mao C."/>
            <person name="Mauceli E."/>
            <person name="Menck C.F."/>
            <person name="Miller J.R."/>
            <person name="Montgomery P."/>
            <person name="Mori A."/>
            <person name="Nascimento A.L."/>
            <person name="Naveira H.F."/>
            <person name="Nusbaum C."/>
            <person name="O'Leary S.B."/>
            <person name="Orvis J."/>
            <person name="Pertea M."/>
            <person name="Quesneville H."/>
            <person name="Reidenbach K.R."/>
            <person name="Rogers Y.-H.C."/>
            <person name="Roth C.W."/>
            <person name="Schneider J.R."/>
            <person name="Schatz M."/>
            <person name="Shumway M."/>
            <person name="Stanke M."/>
            <person name="Stinson E.O."/>
            <person name="Tubio J.M.C."/>
            <person name="Vanzee J.P."/>
            <person name="Verjovski-Almeida S."/>
            <person name="Werner D."/>
            <person name="White O.R."/>
            <person name="Wyder S."/>
            <person name="Zeng Q."/>
            <person name="Zhao Q."/>
            <person name="Zhao Y."/>
            <person name="Hill C.A."/>
            <person name="Raikhel A.S."/>
            <person name="Soares M.B."/>
            <person name="Knudson D.L."/>
            <person name="Lee N.H."/>
            <person name="Galagan J."/>
            <person name="Salzberg S.L."/>
            <person name="Paulsen I.T."/>
            <person name="Dimopoulos G."/>
            <person name="Collins F.H."/>
            <person name="Bruce B."/>
            <person name="Fraser-Liggett C.M."/>
            <person name="Severson D.W."/>
        </authorList>
    </citation>
    <scope>NUCLEOTIDE SEQUENCE [LARGE SCALE GENOMIC DNA]</scope>
    <source>
        <strain>LVPib12</strain>
    </source>
</reference>
<organism>
    <name type="scientific">Aedes aegypti</name>
    <name type="common">Yellowfever mosquito</name>
    <name type="synonym">Culex aegypti</name>
    <dbReference type="NCBI Taxonomy" id="7159"/>
    <lineage>
        <taxon>Eukaryota</taxon>
        <taxon>Metazoa</taxon>
        <taxon>Ecdysozoa</taxon>
        <taxon>Arthropoda</taxon>
        <taxon>Hexapoda</taxon>
        <taxon>Insecta</taxon>
        <taxon>Pterygota</taxon>
        <taxon>Neoptera</taxon>
        <taxon>Endopterygota</taxon>
        <taxon>Diptera</taxon>
        <taxon>Nematocera</taxon>
        <taxon>Culicoidea</taxon>
        <taxon>Culicidae</taxon>
        <taxon>Culicinae</taxon>
        <taxon>Aedini</taxon>
        <taxon>Aedes</taxon>
        <taxon>Stegomyia</taxon>
    </lineage>
</organism>
<evidence type="ECO:0000255" key="1">
    <source>
        <dbReference type="HAMAP-Rule" id="MF_03009"/>
    </source>
</evidence>
<evidence type="ECO:0000256" key="2">
    <source>
        <dbReference type="SAM" id="MobiDB-lite"/>
    </source>
</evidence>
<dbReference type="EMBL" id="CH477859">
    <property type="protein sequence ID" value="EAT35564.1"/>
    <property type="molecule type" value="Genomic_DNA"/>
</dbReference>
<dbReference type="SMR" id="Q16MK2"/>
<dbReference type="FunCoup" id="Q16MK2">
    <property type="interactions" value="1584"/>
</dbReference>
<dbReference type="STRING" id="7159.Q16MK2"/>
<dbReference type="PaxDb" id="7159-AAEL012279-PA"/>
<dbReference type="EnsemblMetazoa" id="AAEL012279-RA">
    <property type="protein sequence ID" value="AAEL012279-PA"/>
    <property type="gene ID" value="AAEL012279"/>
</dbReference>
<dbReference type="GeneID" id="5576042"/>
<dbReference type="KEGG" id="aag:5576042"/>
<dbReference type="CTD" id="8669"/>
<dbReference type="VEuPathDB" id="VectorBase:AAEL012279"/>
<dbReference type="eggNOG" id="KOG4813">
    <property type="taxonomic scope" value="Eukaryota"/>
</dbReference>
<dbReference type="HOGENOM" id="CLU_085806_2_0_1"/>
<dbReference type="InParanoid" id="Q16MK2"/>
<dbReference type="OMA" id="KPHYALW"/>
<dbReference type="OrthoDB" id="20381at2759"/>
<dbReference type="PhylomeDB" id="Q16MK2"/>
<dbReference type="Proteomes" id="UP000008820">
    <property type="component" value="Chromosome 2"/>
</dbReference>
<dbReference type="Proteomes" id="UP000682892">
    <property type="component" value="Unassembled WGS sequence"/>
</dbReference>
<dbReference type="GO" id="GO:0016282">
    <property type="term" value="C:eukaryotic 43S preinitiation complex"/>
    <property type="evidence" value="ECO:0007669"/>
    <property type="project" value="UniProtKB-UniRule"/>
</dbReference>
<dbReference type="GO" id="GO:0033290">
    <property type="term" value="C:eukaryotic 48S preinitiation complex"/>
    <property type="evidence" value="ECO:0007669"/>
    <property type="project" value="UniProtKB-UniRule"/>
</dbReference>
<dbReference type="GO" id="GO:0005852">
    <property type="term" value="C:eukaryotic translation initiation factor 3 complex"/>
    <property type="evidence" value="ECO:0007669"/>
    <property type="project" value="UniProtKB-UniRule"/>
</dbReference>
<dbReference type="GO" id="GO:0003743">
    <property type="term" value="F:translation initiation factor activity"/>
    <property type="evidence" value="ECO:0007669"/>
    <property type="project" value="UniProtKB-UniRule"/>
</dbReference>
<dbReference type="GO" id="GO:0001732">
    <property type="term" value="P:formation of cytoplasmic translation initiation complex"/>
    <property type="evidence" value="ECO:0007669"/>
    <property type="project" value="UniProtKB-UniRule"/>
</dbReference>
<dbReference type="Gene3D" id="1.10.246.60">
    <property type="entry name" value="Eukaryotic translation initiation factor 3 like domains"/>
    <property type="match status" value="1"/>
</dbReference>
<dbReference type="HAMAP" id="MF_03009">
    <property type="entry name" value="eIF3j"/>
    <property type="match status" value="1"/>
</dbReference>
<dbReference type="InterPro" id="IPR023194">
    <property type="entry name" value="eIF3-like_dom_sf"/>
</dbReference>
<dbReference type="InterPro" id="IPR013906">
    <property type="entry name" value="eIF3j"/>
</dbReference>
<dbReference type="PANTHER" id="PTHR21681">
    <property type="entry name" value="EUKARYOTIC TRANSLATION INITIATION FACTOR 3 SUBUNIT J"/>
    <property type="match status" value="1"/>
</dbReference>
<dbReference type="PANTHER" id="PTHR21681:SF0">
    <property type="entry name" value="EUKARYOTIC TRANSLATION INITIATION FACTOR 3 SUBUNIT J"/>
    <property type="match status" value="1"/>
</dbReference>
<dbReference type="Pfam" id="PF08597">
    <property type="entry name" value="eIF3_subunit"/>
    <property type="match status" value="1"/>
</dbReference>
<protein>
    <recommendedName>
        <fullName evidence="1">Eukaryotic translation initiation factor 3 subunit J</fullName>
        <shortName evidence="1">eIF3j</shortName>
    </recommendedName>
</protein>
<feature type="chain" id="PRO_0000365128" description="Eukaryotic translation initiation factor 3 subunit J">
    <location>
        <begin position="1"/>
        <end position="241"/>
    </location>
</feature>
<feature type="region of interest" description="Disordered" evidence="2">
    <location>
        <begin position="1"/>
        <end position="97"/>
    </location>
</feature>
<feature type="coiled-coil region" evidence="1">
    <location>
        <begin position="31"/>
        <end position="119"/>
    </location>
</feature>
<feature type="compositionally biased region" description="Acidic residues" evidence="2">
    <location>
        <begin position="28"/>
        <end position="45"/>
    </location>
</feature>
<feature type="compositionally biased region" description="Basic and acidic residues" evidence="2">
    <location>
        <begin position="46"/>
        <end position="58"/>
    </location>
</feature>
<feature type="compositionally biased region" description="Basic and acidic residues" evidence="2">
    <location>
        <begin position="69"/>
        <end position="87"/>
    </location>
</feature>
<proteinExistence type="inferred from homology"/>